<feature type="chain" id="PRO_1000008221" description="Translation initiation factor IF-2">
    <location>
        <begin position="1"/>
        <end position="838"/>
    </location>
</feature>
<feature type="domain" description="tr-type G">
    <location>
        <begin position="337"/>
        <end position="506"/>
    </location>
</feature>
<feature type="region of interest" description="Disordered" evidence="3">
    <location>
        <begin position="50"/>
        <end position="108"/>
    </location>
</feature>
<feature type="region of interest" description="G1" evidence="1">
    <location>
        <begin position="346"/>
        <end position="353"/>
    </location>
</feature>
<feature type="region of interest" description="G2" evidence="1">
    <location>
        <begin position="371"/>
        <end position="375"/>
    </location>
</feature>
<feature type="region of interest" description="G3" evidence="1">
    <location>
        <begin position="392"/>
        <end position="395"/>
    </location>
</feature>
<feature type="region of interest" description="G4" evidence="1">
    <location>
        <begin position="446"/>
        <end position="449"/>
    </location>
</feature>
<feature type="region of interest" description="G5" evidence="1">
    <location>
        <begin position="482"/>
        <end position="484"/>
    </location>
</feature>
<feature type="compositionally biased region" description="Basic and acidic residues" evidence="3">
    <location>
        <begin position="54"/>
        <end position="65"/>
    </location>
</feature>
<feature type="compositionally biased region" description="Polar residues" evidence="3">
    <location>
        <begin position="66"/>
        <end position="81"/>
    </location>
</feature>
<feature type="binding site" evidence="2">
    <location>
        <begin position="346"/>
        <end position="353"/>
    </location>
    <ligand>
        <name>GTP</name>
        <dbReference type="ChEBI" id="CHEBI:37565"/>
    </ligand>
</feature>
<feature type="binding site" evidence="2">
    <location>
        <begin position="392"/>
        <end position="396"/>
    </location>
    <ligand>
        <name>GTP</name>
        <dbReference type="ChEBI" id="CHEBI:37565"/>
    </ligand>
</feature>
<feature type="binding site" evidence="2">
    <location>
        <begin position="446"/>
        <end position="449"/>
    </location>
    <ligand>
        <name>GTP</name>
        <dbReference type="ChEBI" id="CHEBI:37565"/>
    </ligand>
</feature>
<accession>A0RQZ4</accession>
<organism>
    <name type="scientific">Campylobacter fetus subsp. fetus (strain 82-40)</name>
    <dbReference type="NCBI Taxonomy" id="360106"/>
    <lineage>
        <taxon>Bacteria</taxon>
        <taxon>Pseudomonadati</taxon>
        <taxon>Campylobacterota</taxon>
        <taxon>Epsilonproteobacteria</taxon>
        <taxon>Campylobacterales</taxon>
        <taxon>Campylobacteraceae</taxon>
        <taxon>Campylobacter</taxon>
    </lineage>
</organism>
<gene>
    <name evidence="2" type="primary">infB</name>
    <name type="ordered locus">CFF8240_1493</name>
</gene>
<evidence type="ECO:0000250" key="1"/>
<evidence type="ECO:0000255" key="2">
    <source>
        <dbReference type="HAMAP-Rule" id="MF_00100"/>
    </source>
</evidence>
<evidence type="ECO:0000256" key="3">
    <source>
        <dbReference type="SAM" id="MobiDB-lite"/>
    </source>
</evidence>
<comment type="function">
    <text evidence="2">One of the essential components for the initiation of protein synthesis. Protects formylmethionyl-tRNA from spontaneous hydrolysis and promotes its binding to the 30S ribosomal subunits. Also involved in the hydrolysis of GTP during the formation of the 70S ribosomal complex.</text>
</comment>
<comment type="subcellular location">
    <subcellularLocation>
        <location evidence="2">Cytoplasm</location>
    </subcellularLocation>
</comment>
<comment type="similarity">
    <text evidence="2">Belongs to the TRAFAC class translation factor GTPase superfamily. Classic translation factor GTPase family. IF-2 subfamily.</text>
</comment>
<sequence>MANIRIHEIAKELGYSNKEILEKAKELGFKVTTSSSAVTPEDAAQLYDYVQSGKKPESPEKKDIKQNTQKEAPETQTQQKPIEQEVETKQNIDSTPIKVEPKQESLASSTLSKRRGLVIVKKKKVEVQPIQKQQSEPINKGLEAIFGSSDENLKKKKKEKKPIIATKKENSAKIDLLSAISFSDDISIDDEDVVVLPDLTVKPIEIERQNTVKKQINVYKTSQNNSFSFEGGIQRNSRKKHKKVVKDKDNEDISSVDIPKEIRLYEFADKIKKSSSEVIAKLFILGKMTTKNDFLEEDEIEILGAEFGIEVNIVDTKEDFDYVKAYEDEILEDNSVSRAPVVTIMGHVDHGKTSLLDYIRNSRVASGEAGGITQHVGAYMVEKSGKNITFIDTPGHEAFTAMRARGASVTDIVIIVVAADDGVKPQTKEAINHAKAAGVPIIIAINKMDKESANPDLVKTGLAELDILPTEWGGGYEFVPISAKTGIGIEDLLEIVLLQAELLELKANPDREAKATIIESSLQKGRGPVATAIVENGTLRVGDTIVAGVAYGKVRALQDDKGNSLKSIKPGECGVIIGLSEVPDAGETLISVKTDKEAREYAQKKYDYLRQKELSKSTKVTIDELSAKIAEGELKSLPVIIKADVQGSLEAIKASLEKLKNDEIKVDIIHSGVGGISQSDITLASASSNCVILGFNIRPTGDVKEKAKERSVEIKTYNVIYNLIDDVKALLSGLMSPIISEEELGQAVIRQVINVPKIGQIAGCMVTDGSINRGAKIRVIRDGVVVFEGNVSSLKRFKDDVKEVAKGYECGVGIEGYNDMREGDYIESYKEVESKVEL</sequence>
<keyword id="KW-0963">Cytoplasm</keyword>
<keyword id="KW-0342">GTP-binding</keyword>
<keyword id="KW-0396">Initiation factor</keyword>
<keyword id="KW-0547">Nucleotide-binding</keyword>
<keyword id="KW-0648">Protein biosynthesis</keyword>
<name>IF2_CAMFF</name>
<reference key="1">
    <citation type="submission" date="2006-11" db="EMBL/GenBank/DDBJ databases">
        <title>Sequence of Campylobacter fetus subsp. fetus 82-40.</title>
        <authorList>
            <person name="Fouts D.E."/>
            <person name="Nelson K.E."/>
        </authorList>
    </citation>
    <scope>NUCLEOTIDE SEQUENCE [LARGE SCALE GENOMIC DNA]</scope>
    <source>
        <strain>82-40</strain>
    </source>
</reference>
<dbReference type="EMBL" id="CP000487">
    <property type="protein sequence ID" value="ABK82048.1"/>
    <property type="molecule type" value="Genomic_DNA"/>
</dbReference>
<dbReference type="RefSeq" id="WP_002850489.1">
    <property type="nucleotide sequence ID" value="NC_008599.1"/>
</dbReference>
<dbReference type="SMR" id="A0RQZ4"/>
<dbReference type="GeneID" id="61065310"/>
<dbReference type="KEGG" id="cff:CFF8240_1493"/>
<dbReference type="eggNOG" id="COG0532">
    <property type="taxonomic scope" value="Bacteria"/>
</dbReference>
<dbReference type="HOGENOM" id="CLU_006301_4_1_7"/>
<dbReference type="Proteomes" id="UP000000760">
    <property type="component" value="Chromosome"/>
</dbReference>
<dbReference type="GO" id="GO:0005829">
    <property type="term" value="C:cytosol"/>
    <property type="evidence" value="ECO:0007669"/>
    <property type="project" value="TreeGrafter"/>
</dbReference>
<dbReference type="GO" id="GO:0005525">
    <property type="term" value="F:GTP binding"/>
    <property type="evidence" value="ECO:0007669"/>
    <property type="project" value="UniProtKB-KW"/>
</dbReference>
<dbReference type="GO" id="GO:0003924">
    <property type="term" value="F:GTPase activity"/>
    <property type="evidence" value="ECO:0007669"/>
    <property type="project" value="UniProtKB-UniRule"/>
</dbReference>
<dbReference type="GO" id="GO:0003743">
    <property type="term" value="F:translation initiation factor activity"/>
    <property type="evidence" value="ECO:0007669"/>
    <property type="project" value="UniProtKB-UniRule"/>
</dbReference>
<dbReference type="CDD" id="cd01887">
    <property type="entry name" value="IF2_eIF5B"/>
    <property type="match status" value="1"/>
</dbReference>
<dbReference type="CDD" id="cd03702">
    <property type="entry name" value="IF2_mtIF2_II"/>
    <property type="match status" value="1"/>
</dbReference>
<dbReference type="CDD" id="cd03692">
    <property type="entry name" value="mtIF2_IVc"/>
    <property type="match status" value="1"/>
</dbReference>
<dbReference type="FunFam" id="2.40.30.10:FF:000008">
    <property type="entry name" value="Translation initiation factor IF-2"/>
    <property type="match status" value="1"/>
</dbReference>
<dbReference type="FunFam" id="2.40.30.10:FF:000054">
    <property type="entry name" value="Translation initiation factor IF-2"/>
    <property type="match status" value="1"/>
</dbReference>
<dbReference type="FunFam" id="3.40.50.10050:FF:000001">
    <property type="entry name" value="Translation initiation factor IF-2"/>
    <property type="match status" value="1"/>
</dbReference>
<dbReference type="FunFam" id="3.40.50.300:FF:000019">
    <property type="entry name" value="Translation initiation factor IF-2"/>
    <property type="match status" value="1"/>
</dbReference>
<dbReference type="Gene3D" id="1.10.10.2480">
    <property type="match status" value="1"/>
</dbReference>
<dbReference type="Gene3D" id="3.40.50.300">
    <property type="entry name" value="P-loop containing nucleotide triphosphate hydrolases"/>
    <property type="match status" value="1"/>
</dbReference>
<dbReference type="Gene3D" id="2.40.30.10">
    <property type="entry name" value="Translation factors"/>
    <property type="match status" value="2"/>
</dbReference>
<dbReference type="Gene3D" id="3.40.50.10050">
    <property type="entry name" value="Translation initiation factor IF- 2, domain 3"/>
    <property type="match status" value="1"/>
</dbReference>
<dbReference type="HAMAP" id="MF_00100_B">
    <property type="entry name" value="IF_2_B"/>
    <property type="match status" value="1"/>
</dbReference>
<dbReference type="InterPro" id="IPR053905">
    <property type="entry name" value="EF-G-like_DII"/>
</dbReference>
<dbReference type="InterPro" id="IPR004161">
    <property type="entry name" value="EFTu-like_2"/>
</dbReference>
<dbReference type="InterPro" id="IPR044145">
    <property type="entry name" value="IF2_II"/>
</dbReference>
<dbReference type="InterPro" id="IPR006847">
    <property type="entry name" value="IF2_N"/>
</dbReference>
<dbReference type="InterPro" id="IPR027417">
    <property type="entry name" value="P-loop_NTPase"/>
</dbReference>
<dbReference type="InterPro" id="IPR005225">
    <property type="entry name" value="Small_GTP-bd"/>
</dbReference>
<dbReference type="InterPro" id="IPR000795">
    <property type="entry name" value="T_Tr_GTP-bd_dom"/>
</dbReference>
<dbReference type="InterPro" id="IPR000178">
    <property type="entry name" value="TF_IF2_bacterial-like"/>
</dbReference>
<dbReference type="InterPro" id="IPR015760">
    <property type="entry name" value="TIF_IF2"/>
</dbReference>
<dbReference type="InterPro" id="IPR023115">
    <property type="entry name" value="TIF_IF2_dom3"/>
</dbReference>
<dbReference type="InterPro" id="IPR036925">
    <property type="entry name" value="TIF_IF2_dom3_sf"/>
</dbReference>
<dbReference type="InterPro" id="IPR009000">
    <property type="entry name" value="Transl_B-barrel_sf"/>
</dbReference>
<dbReference type="NCBIfam" id="TIGR00487">
    <property type="entry name" value="IF-2"/>
    <property type="match status" value="1"/>
</dbReference>
<dbReference type="NCBIfam" id="TIGR00231">
    <property type="entry name" value="small_GTP"/>
    <property type="match status" value="1"/>
</dbReference>
<dbReference type="PANTHER" id="PTHR43381:SF5">
    <property type="entry name" value="TR-TYPE G DOMAIN-CONTAINING PROTEIN"/>
    <property type="match status" value="1"/>
</dbReference>
<dbReference type="PANTHER" id="PTHR43381">
    <property type="entry name" value="TRANSLATION INITIATION FACTOR IF-2-RELATED"/>
    <property type="match status" value="1"/>
</dbReference>
<dbReference type="Pfam" id="PF22042">
    <property type="entry name" value="EF-G_D2"/>
    <property type="match status" value="1"/>
</dbReference>
<dbReference type="Pfam" id="PF00009">
    <property type="entry name" value="GTP_EFTU"/>
    <property type="match status" value="1"/>
</dbReference>
<dbReference type="Pfam" id="PF03144">
    <property type="entry name" value="GTP_EFTU_D2"/>
    <property type="match status" value="1"/>
</dbReference>
<dbReference type="Pfam" id="PF11987">
    <property type="entry name" value="IF-2"/>
    <property type="match status" value="1"/>
</dbReference>
<dbReference type="Pfam" id="PF04760">
    <property type="entry name" value="IF2_N"/>
    <property type="match status" value="2"/>
</dbReference>
<dbReference type="SUPFAM" id="SSF52156">
    <property type="entry name" value="Initiation factor IF2/eIF5b, domain 3"/>
    <property type="match status" value="1"/>
</dbReference>
<dbReference type="SUPFAM" id="SSF52540">
    <property type="entry name" value="P-loop containing nucleoside triphosphate hydrolases"/>
    <property type="match status" value="1"/>
</dbReference>
<dbReference type="SUPFAM" id="SSF50447">
    <property type="entry name" value="Translation proteins"/>
    <property type="match status" value="2"/>
</dbReference>
<dbReference type="PROSITE" id="PS51722">
    <property type="entry name" value="G_TR_2"/>
    <property type="match status" value="1"/>
</dbReference>
<dbReference type="PROSITE" id="PS01176">
    <property type="entry name" value="IF2"/>
    <property type="match status" value="1"/>
</dbReference>
<proteinExistence type="inferred from homology"/>
<protein>
    <recommendedName>
        <fullName evidence="2">Translation initiation factor IF-2</fullName>
    </recommendedName>
</protein>